<name>RL27_MACFA</name>
<comment type="function">
    <text evidence="1 2">Component of the large ribosomal subunit (By similarity). Required for proper rRNA processing and maturation of 28S and 5.8S rRNAs (By similarity).</text>
</comment>
<comment type="subunit">
    <text evidence="1 2">Component of the large ribosomal subunit (By similarity). Interacts with RRP1B (By similarity). Component of the large ribosomal subunit. Interacts with RRP1B. Interacts with DHX33 (By similarity).</text>
</comment>
<comment type="subcellular location">
    <subcellularLocation>
        <location evidence="2">Cytoplasm</location>
        <location evidence="2">Cytosol</location>
    </subcellularLocation>
    <subcellularLocation>
        <location evidence="2">Cytoplasm</location>
    </subcellularLocation>
    <subcellularLocation>
        <location evidence="1">Rough endoplasmic reticulum</location>
    </subcellularLocation>
    <text evidence="1 2">Detected on cytosolic polysomes (By similarity). Detected in ribosomes that are associated with the rough endoplasmic reticulum (By similarity).</text>
</comment>
<comment type="similarity">
    <text evidence="3">Belongs to the eukaryotic ribosomal protein eL27 family.</text>
</comment>
<keyword id="KW-0007">Acetylation</keyword>
<keyword id="KW-0963">Cytoplasm</keyword>
<keyword id="KW-0256">Endoplasmic reticulum</keyword>
<keyword id="KW-1185">Reference proteome</keyword>
<keyword id="KW-0687">Ribonucleoprotein</keyword>
<keyword id="KW-0689">Ribosomal protein</keyword>
<proteinExistence type="evidence at transcript level"/>
<protein>
    <recommendedName>
        <fullName evidence="3">Large ribosomal subunit protein eL27</fullName>
    </recommendedName>
    <alternativeName>
        <fullName>60S ribosomal protein L27</fullName>
    </alternativeName>
</protein>
<gene>
    <name type="primary">RPL27</name>
    <name type="ORF">QtsA-11090</name>
</gene>
<organism>
    <name type="scientific">Macaca fascicularis</name>
    <name type="common">Crab-eating macaque</name>
    <name type="synonym">Cynomolgus monkey</name>
    <dbReference type="NCBI Taxonomy" id="9541"/>
    <lineage>
        <taxon>Eukaryota</taxon>
        <taxon>Metazoa</taxon>
        <taxon>Chordata</taxon>
        <taxon>Craniata</taxon>
        <taxon>Vertebrata</taxon>
        <taxon>Euteleostomi</taxon>
        <taxon>Mammalia</taxon>
        <taxon>Eutheria</taxon>
        <taxon>Euarchontoglires</taxon>
        <taxon>Primates</taxon>
        <taxon>Haplorrhini</taxon>
        <taxon>Catarrhini</taxon>
        <taxon>Cercopithecidae</taxon>
        <taxon>Cercopithecinae</taxon>
        <taxon>Macaca</taxon>
    </lineage>
</organism>
<dbReference type="EMBL" id="AB168303">
    <property type="protein sequence ID" value="BAE00427.1"/>
    <property type="molecule type" value="mRNA"/>
</dbReference>
<dbReference type="RefSeq" id="NP_001274259.1">
    <property type="nucleotide sequence ID" value="NM_001287330.1"/>
</dbReference>
<dbReference type="RefSeq" id="XP_045231874.1">
    <property type="nucleotide sequence ID" value="XM_045375939.1"/>
</dbReference>
<dbReference type="SMR" id="Q4R8Z4"/>
<dbReference type="STRING" id="9541.ENSMFAP00000037353"/>
<dbReference type="Ensembl" id="ENSMFAT00000011603.2">
    <property type="protein sequence ID" value="ENSMFAP00000037353.1"/>
    <property type="gene ID" value="ENSMFAG00000037912.2"/>
</dbReference>
<dbReference type="GeneID" id="102114924"/>
<dbReference type="VEuPathDB" id="HostDB:ENSMFAG00000037912"/>
<dbReference type="eggNOG" id="KOG3418">
    <property type="taxonomic scope" value="Eukaryota"/>
</dbReference>
<dbReference type="GeneTree" id="ENSGT00390000010721"/>
<dbReference type="OMA" id="NQWFFTK"/>
<dbReference type="Proteomes" id="UP000233100">
    <property type="component" value="Chromosome 16"/>
</dbReference>
<dbReference type="Bgee" id="ENSMFAG00000037912">
    <property type="expression patterns" value="Expressed in lymph node and 13 other cell types or tissues"/>
</dbReference>
<dbReference type="GO" id="GO:0098556">
    <property type="term" value="C:cytoplasmic side of rough endoplasmic reticulum membrane"/>
    <property type="evidence" value="ECO:0000250"/>
    <property type="project" value="UniProtKB"/>
</dbReference>
<dbReference type="GO" id="GO:0022625">
    <property type="term" value="C:cytosolic large ribosomal subunit"/>
    <property type="evidence" value="ECO:0007669"/>
    <property type="project" value="Ensembl"/>
</dbReference>
<dbReference type="GO" id="GO:0015934">
    <property type="term" value="C:large ribosomal subunit"/>
    <property type="evidence" value="ECO:0000250"/>
    <property type="project" value="UniProtKB"/>
</dbReference>
<dbReference type="GO" id="GO:0005730">
    <property type="term" value="C:nucleolus"/>
    <property type="evidence" value="ECO:0007669"/>
    <property type="project" value="Ensembl"/>
</dbReference>
<dbReference type="GO" id="GO:0005654">
    <property type="term" value="C:nucleoplasm"/>
    <property type="evidence" value="ECO:0007669"/>
    <property type="project" value="Ensembl"/>
</dbReference>
<dbReference type="GO" id="GO:0045202">
    <property type="term" value="C:synapse"/>
    <property type="evidence" value="ECO:0007669"/>
    <property type="project" value="Ensembl"/>
</dbReference>
<dbReference type="GO" id="GO:0003735">
    <property type="term" value="F:structural constituent of ribosome"/>
    <property type="evidence" value="ECO:0007669"/>
    <property type="project" value="Ensembl"/>
</dbReference>
<dbReference type="GO" id="GO:0006364">
    <property type="term" value="P:rRNA processing"/>
    <property type="evidence" value="ECO:0007669"/>
    <property type="project" value="Ensembl"/>
</dbReference>
<dbReference type="GO" id="GO:0006412">
    <property type="term" value="P:translation"/>
    <property type="evidence" value="ECO:0007669"/>
    <property type="project" value="InterPro"/>
</dbReference>
<dbReference type="CDD" id="cd06090">
    <property type="entry name" value="KOW_RPL27"/>
    <property type="match status" value="1"/>
</dbReference>
<dbReference type="FunFam" id="2.30.30.770:FF:000001">
    <property type="entry name" value="60S ribosomal protein L27"/>
    <property type="match status" value="1"/>
</dbReference>
<dbReference type="Gene3D" id="2.30.30.770">
    <property type="match status" value="1"/>
</dbReference>
<dbReference type="InterPro" id="IPR005824">
    <property type="entry name" value="KOW"/>
</dbReference>
<dbReference type="InterPro" id="IPR001141">
    <property type="entry name" value="Ribosomal_eL27"/>
</dbReference>
<dbReference type="InterPro" id="IPR018262">
    <property type="entry name" value="Ribosomal_eL27_CS"/>
</dbReference>
<dbReference type="InterPro" id="IPR041991">
    <property type="entry name" value="Ribosomal_eL27_KOW"/>
</dbReference>
<dbReference type="InterPro" id="IPR038655">
    <property type="entry name" value="Ribosomal_eL27_sf"/>
</dbReference>
<dbReference type="InterPro" id="IPR008991">
    <property type="entry name" value="Translation_prot_SH3-like_sf"/>
</dbReference>
<dbReference type="PANTHER" id="PTHR10497">
    <property type="entry name" value="60S RIBOSOMAL PROTEIN L27"/>
    <property type="match status" value="1"/>
</dbReference>
<dbReference type="Pfam" id="PF00467">
    <property type="entry name" value="KOW"/>
    <property type="match status" value="1"/>
</dbReference>
<dbReference type="Pfam" id="PF01777">
    <property type="entry name" value="Ribosomal_L27e"/>
    <property type="match status" value="1"/>
</dbReference>
<dbReference type="SMART" id="SM00739">
    <property type="entry name" value="KOW"/>
    <property type="match status" value="1"/>
</dbReference>
<dbReference type="SUPFAM" id="SSF50104">
    <property type="entry name" value="Translation proteins SH3-like domain"/>
    <property type="match status" value="1"/>
</dbReference>
<dbReference type="PROSITE" id="PS01107">
    <property type="entry name" value="RIBOSOMAL_L27E"/>
    <property type="match status" value="1"/>
</dbReference>
<reference key="1">
    <citation type="submission" date="2005-06" db="EMBL/GenBank/DDBJ databases">
        <title>DNA sequences of macaque genes expressed in brain or testis and its evolutionary implications.</title>
        <authorList>
            <consortium name="International consortium for macaque cDNA sequencing and analysis"/>
        </authorList>
    </citation>
    <scope>NUCLEOTIDE SEQUENCE [LARGE SCALE MRNA]</scope>
    <source>
        <tissue>Testis</tissue>
    </source>
</reference>
<accession>Q4R8Z4</accession>
<feature type="chain" id="PRO_0000319311" description="Large ribosomal subunit protein eL27">
    <location>
        <begin position="1"/>
        <end position="136"/>
    </location>
</feature>
<feature type="domain" description="KOW">
    <location>
        <begin position="5"/>
        <end position="40"/>
    </location>
</feature>
<feature type="modified residue" description="N6-acetyllysine" evidence="2">
    <location>
        <position position="27"/>
    </location>
</feature>
<feature type="modified residue" description="N6-acetyllysine" evidence="2">
    <location>
        <position position="93"/>
    </location>
</feature>
<evidence type="ECO:0000250" key="1">
    <source>
        <dbReference type="UniProtKB" id="A1XQU5"/>
    </source>
</evidence>
<evidence type="ECO:0000250" key="2">
    <source>
        <dbReference type="UniProtKB" id="P61353"/>
    </source>
</evidence>
<evidence type="ECO:0000305" key="3"/>
<sequence length="136" mass="15798">MGKFMKPGKVVLVLAGRYSGRKAVIVKNIDDGTSDRPYSHALVAGIDRYPRKVTAAMGKKKIAKRSKIKSFVKVYNYNHLMPTRYSVDIPLDKTVVNKDVFRDPALKRKARREAKVKFEERYKTGKNKWFFQKLRF</sequence>